<sequence>MQFTSVFTILAIAMTAAAAPAEVVPRATTIGPNTCSIDDYKPYCCQSMSGPAGSPGLLNLIPVDLSASLGCVVGVIGSQCGASVKCCKDDVTNTGNSFLIINAANCVA</sequence>
<reference key="1">
    <citation type="journal article" date="1992" name="Genes Dev.">
        <title>The Neurospora circadian clock-controlled gene, ccg-2, is allelic to eas and encodes a fungal hydrophobin required for formation of the conidial rodlet layer.</title>
        <authorList>
            <person name="Bell-Pedersen D."/>
            <person name="Dunlap J.C."/>
            <person name="Loros J.J."/>
        </authorList>
    </citation>
    <scope>NUCLEOTIDE SEQUENCE [MRNA]</scope>
    <scope>INDUCTION</scope>
    <scope>FUNCTION</scope>
    <source>
        <strain>ATCC 24698 / 74-OR23-1A / CBS 708.71 / DSM 1257 / FGSC 987</strain>
    </source>
</reference>
<reference key="2">
    <citation type="journal article" date="1992" name="DNA Seq.">
        <title>Neurospora crassa blue-light-inducible gene bli-7 encodes a short hydrophobic protein.</title>
        <authorList>
            <person name="Eberle J."/>
            <person name="Russo V.E.A."/>
        </authorList>
    </citation>
    <scope>NUCLEOTIDE SEQUENCE [GENOMIC DNA]</scope>
</reference>
<reference key="3">
    <citation type="journal article" date="2003" name="Nature">
        <title>The genome sequence of the filamentous fungus Neurospora crassa.</title>
        <authorList>
            <person name="Galagan J.E."/>
            <person name="Calvo S.E."/>
            <person name="Borkovich K.A."/>
            <person name="Selker E.U."/>
            <person name="Read N.D."/>
            <person name="Jaffe D.B."/>
            <person name="FitzHugh W."/>
            <person name="Ma L.-J."/>
            <person name="Smirnov S."/>
            <person name="Purcell S."/>
            <person name="Rehman B."/>
            <person name="Elkins T."/>
            <person name="Engels R."/>
            <person name="Wang S."/>
            <person name="Nielsen C.B."/>
            <person name="Butler J."/>
            <person name="Endrizzi M."/>
            <person name="Qui D."/>
            <person name="Ianakiev P."/>
            <person name="Bell-Pedersen D."/>
            <person name="Nelson M.A."/>
            <person name="Werner-Washburne M."/>
            <person name="Selitrennikoff C.P."/>
            <person name="Kinsey J.A."/>
            <person name="Braun E.L."/>
            <person name="Zelter A."/>
            <person name="Schulte U."/>
            <person name="Kothe G.O."/>
            <person name="Jedd G."/>
            <person name="Mewes H.-W."/>
            <person name="Staben C."/>
            <person name="Marcotte E."/>
            <person name="Greenberg D."/>
            <person name="Roy A."/>
            <person name="Foley K."/>
            <person name="Naylor J."/>
            <person name="Stange-Thomann N."/>
            <person name="Barrett R."/>
            <person name="Gnerre S."/>
            <person name="Kamal M."/>
            <person name="Kamvysselis M."/>
            <person name="Mauceli E.W."/>
            <person name="Bielke C."/>
            <person name="Rudd S."/>
            <person name="Frishman D."/>
            <person name="Krystofova S."/>
            <person name="Rasmussen C."/>
            <person name="Metzenberg R.L."/>
            <person name="Perkins D.D."/>
            <person name="Kroken S."/>
            <person name="Cogoni C."/>
            <person name="Macino G."/>
            <person name="Catcheside D.E.A."/>
            <person name="Li W."/>
            <person name="Pratt R.J."/>
            <person name="Osmani S.A."/>
            <person name="DeSouza C.P.C."/>
            <person name="Glass N.L."/>
            <person name="Orbach M.J."/>
            <person name="Berglund J.A."/>
            <person name="Voelker R."/>
            <person name="Yarden O."/>
            <person name="Plamann M."/>
            <person name="Seiler S."/>
            <person name="Dunlap J.C."/>
            <person name="Radford A."/>
            <person name="Aramayo R."/>
            <person name="Natvig D.O."/>
            <person name="Alex L.A."/>
            <person name="Mannhaupt G."/>
            <person name="Ebbole D.J."/>
            <person name="Freitag M."/>
            <person name="Paulsen I."/>
            <person name="Sachs M.S."/>
            <person name="Lander E.S."/>
            <person name="Nusbaum C."/>
            <person name="Birren B.W."/>
        </authorList>
    </citation>
    <scope>NUCLEOTIDE SEQUENCE [LARGE SCALE GENOMIC DNA]</scope>
    <source>
        <strain>ATCC 24698 / 74-OR23-1A / CBS 708.71 / DSM 1257 / FGSC 987</strain>
    </source>
</reference>
<reference key="4">
    <citation type="journal article" date="1992" name="Genes Dev.">
        <title>Developmental and light regulation of eas, the structural gene for the rodlet protein of Neurospora.</title>
        <authorList>
            <person name="Lauter F.-R."/>
            <person name="Russo V.E.A."/>
            <person name="Yanofsky C."/>
        </authorList>
    </citation>
    <scope>INDUCTION</scope>
</reference>
<reference key="5">
    <citation type="journal article" date="1996" name="Mol. Cell. Biol.">
        <title>Distinct cis-acting elements mediate clock, light, and developmental regulation of the Neurospora crassa eas (ccg-2) gene.</title>
        <authorList>
            <person name="Bell-Pedersen D."/>
            <person name="Dunlap J.C."/>
            <person name="Loros J.J."/>
        </authorList>
    </citation>
    <scope>INDUCTION</scope>
</reference>
<reference key="6">
    <citation type="journal article" date="2001" name="Mol. Microbiol.">
        <title>The Neurospora circadian clock regulates a transcription factor that controls rhythmic expression of the output eas(ccg-2) gene.</title>
        <authorList>
            <person name="Bell-Pedersen D."/>
            <person name="Lewis Z.A."/>
            <person name="Loros J.J."/>
            <person name="Dunlap J.C."/>
        </authorList>
    </citation>
    <scope>INDUCTION</scope>
</reference>
<reference evidence="13" key="7">
    <citation type="journal article" date="2006" name="Proc. Natl. Acad. Sci. U.S.A.">
        <title>Structural basis for rodlet assembly in fungal hydrophobins.</title>
        <authorList>
            <person name="Kwan A.H."/>
            <person name="Winefield R.D."/>
            <person name="Sunde M."/>
            <person name="Matthews J.M."/>
            <person name="Haverkamp R.G."/>
            <person name="Templeton M.D."/>
            <person name="Mackay J.P."/>
        </authorList>
    </citation>
    <scope>STRUCTURE BY NMR OF 27-108</scope>
    <scope>DISULFIDE BONDS</scope>
    <scope>SUBUNIT</scope>
    <scope>SUBCELLULAR LOCATION</scope>
</reference>
<reference evidence="14" key="8">
    <citation type="journal article" date="2008" name="J. Mol. Biol.">
        <title>The Cys3-Cys4 loop of the hydrophobin EAS is not required for rodlet formation and surface activity.</title>
        <authorList>
            <person name="Kwan A.H."/>
            <person name="Macindoe I."/>
            <person name="Vukasin P.V."/>
            <person name="Morris V.K."/>
            <person name="Kass I."/>
            <person name="Gupte R."/>
            <person name="Mark A.E."/>
            <person name="Templeton M.D."/>
            <person name="Mackay J.P."/>
            <person name="Sunde M."/>
        </authorList>
    </citation>
    <scope>STRUCTURE BY NMR OF 27-108</scope>
    <scope>DISULFIDE BONDS</scope>
    <scope>SUBUNIT</scope>
    <scope>DOMAIN</scope>
    <scope>SUBCELLULAR LOCATION</scope>
</reference>
<reference evidence="15" key="9">
    <citation type="journal article" date="2012" name="Proc. Natl. Acad. Sci. U.S.A.">
        <title>Self-assembly of functional, amphipathic amyloid monolayers by the fungal hydrophobin EAS.</title>
        <authorList>
            <person name="Macindoe I."/>
            <person name="Kwan A.H."/>
            <person name="Ren Q."/>
            <person name="Morris V.K."/>
            <person name="Yang W."/>
            <person name="Mackay J.P."/>
            <person name="Sunde M."/>
        </authorList>
    </citation>
    <scope>STRUCTURE BY NMR OF 27-108</scope>
    <scope>DISULFIDE BONDS</scope>
    <scope>SUBUNIT</scope>
    <scope>SUBCELLULAR LOCATION</scope>
    <scope>FUNCTION</scope>
    <scope>MUTAGENESIS OF VAL-72; VAL-73; VAL-75; ILE-76; ASN-96; PHE-98; LEU-99; ILE-100; ILE-101 AND ASN-102</scope>
</reference>
<reference evidence="16" key="10">
    <citation type="submission" date="2013-07" db="PDB data bank">
        <title>Solution Structure of the Chimeric Hydrophobin Nchi2.</title>
        <authorList>
            <person name="Ren Q."/>
            <person name="Macindoe I."/>
            <person name="Sunde M."/>
            <person name="Kwan A."/>
        </authorList>
    </citation>
    <scope>STRUCTURE BY NMR OF 88-106</scope>
</reference>
<organism>
    <name type="scientific">Neurospora crassa (strain ATCC 24698 / 74-OR23-1A / CBS 708.71 / DSM 1257 / FGSC 987)</name>
    <dbReference type="NCBI Taxonomy" id="367110"/>
    <lineage>
        <taxon>Eukaryota</taxon>
        <taxon>Fungi</taxon>
        <taxon>Dikarya</taxon>
        <taxon>Ascomycota</taxon>
        <taxon>Pezizomycotina</taxon>
        <taxon>Sordariomycetes</taxon>
        <taxon>Sordariomycetidae</taxon>
        <taxon>Sordariales</taxon>
        <taxon>Sordariaceae</taxon>
        <taxon>Neurospora</taxon>
    </lineage>
</organism>
<comment type="function">
    <text evidence="4 7 12">Aerial growth, conidiation, and dispersal of filamentous fungi in the environment rely upon a capability of their secreting small amphipathic proteins called hydrophobins (HPBs) with low sequence identity. Class I can self-assemble into an outermost layer of rodlet bundles on aerial cell surfaces, conferring cellular hydrophobicity that supports fungal growth, development and dispersal; whereas class II form highly ordered films at water-air interfaces through intermolecular interactions but contribute nothing to the rodlet structure (Probable). Eas is a class I hydrophobin that forms functional amyloid fibrils called rodlets that facilitate spore formation and dispersal (PubMed:1459460, PubMed:22308366).</text>
</comment>
<comment type="subunit">
    <text evidence="5 6 7">Self-assembles to form functional amyloid fibrils called rodlets. Self-assembly into fibrillar rodlets occurs spontaneously at hydrophobic:hydrophilic interfaces and the rodlets further associate laterally to form amphipathic monolayers.</text>
</comment>
<comment type="subcellular location">
    <subcellularLocation>
        <location evidence="5 6 7">Secreted</location>
    </subcellularLocation>
    <subcellularLocation>
        <location evidence="5 6 7">Spore wall</location>
    </subcellularLocation>
</comment>
<comment type="induction">
    <text evidence="2 3 4 8">Expression is controlled by blue light and by a circadian clock (PubMed:11532152, PubMed:1459460, PubMed:8552078). A positive activating clock element (ACE) is found to reside in a 45-bp region, just upstream from the TATA box (PubMed:8552078). Expression is regulated both developmentally and by light and is abundant in illuminated mycelia and conidiophores but is not detectable or is barely detectable in dark-grown mycelia, mature macroconidia, microconidia, and ascospores (PubMed:1459459).</text>
</comment>
<comment type="domain">
    <text evidence="6">the Cys3-Cys4 loop (residies Cys-45 to Cys-71) does not have an integral role in the formation or structure of the rodlets and that the major determinant of the unique properties of these proteins is the amphipathic core structure.</text>
</comment>
<comment type="similarity">
    <text evidence="12">Belongs to the fungal hydrophobin family.</text>
</comment>
<keyword id="KW-0002">3D-structure</keyword>
<keyword id="KW-0961">Cell wall biogenesis/degradation</keyword>
<keyword id="KW-0183">Conidiation</keyword>
<keyword id="KW-1015">Disulfide bond</keyword>
<keyword id="KW-1185">Reference proteome</keyword>
<keyword id="KW-0964">Secreted</keyword>
<keyword id="KW-0732">Signal</keyword>
<keyword id="KW-0749">Sporulation</keyword>
<dbReference type="EMBL" id="X67339">
    <property type="protein sequence ID" value="CAA47754.1"/>
    <property type="molecule type" value="mRNA"/>
</dbReference>
<dbReference type="EMBL" id="S50953">
    <property type="protein sequence ID" value="AAA12691.1"/>
    <property type="molecule type" value="Genomic_DNA"/>
</dbReference>
<dbReference type="EMBL" id="X62170">
    <property type="protein sequence ID" value="CAA44101.1"/>
    <property type="molecule type" value="Genomic_DNA"/>
</dbReference>
<dbReference type="EMBL" id="CM002237">
    <property type="protein sequence ID" value="EAA34064.1"/>
    <property type="molecule type" value="Genomic_DNA"/>
</dbReference>
<dbReference type="PIR" id="A46222">
    <property type="entry name" value="A46222"/>
</dbReference>
<dbReference type="RefSeq" id="XP_963300.1">
    <property type="nucleotide sequence ID" value="XM_958207.3"/>
</dbReference>
<dbReference type="PDB" id="2FMC">
    <property type="method" value="NMR"/>
    <property type="chains" value="A=27-108"/>
</dbReference>
<dbReference type="PDB" id="2K6A">
    <property type="method" value="NMR"/>
    <property type="chains" value="A=27-108"/>
</dbReference>
<dbReference type="PDB" id="2LFN">
    <property type="method" value="NMR"/>
    <property type="chains" value="A=27-108"/>
</dbReference>
<dbReference type="PDB" id="4BWH">
    <property type="method" value="NMR"/>
    <property type="chains" value="A=87-105"/>
</dbReference>
<dbReference type="PDBsum" id="2FMC"/>
<dbReference type="PDBsum" id="2K6A"/>
<dbReference type="PDBsum" id="2LFN"/>
<dbReference type="PDBsum" id="4BWH"/>
<dbReference type="SMR" id="Q04571"/>
<dbReference type="STRING" id="367110.Q04571"/>
<dbReference type="PaxDb" id="5141-EFNCRP00000008485"/>
<dbReference type="EnsemblFungi" id="EAA34064">
    <property type="protein sequence ID" value="EAA34064"/>
    <property type="gene ID" value="NCU08457"/>
</dbReference>
<dbReference type="GeneID" id="3879448"/>
<dbReference type="KEGG" id="ncr:NCU08457"/>
<dbReference type="VEuPathDB" id="FungiDB:NCU08457"/>
<dbReference type="HOGENOM" id="CLU_168414_0_0_1"/>
<dbReference type="InParanoid" id="Q04571"/>
<dbReference type="OMA" id="CCNSEPP"/>
<dbReference type="OrthoDB" id="10303375at2759"/>
<dbReference type="EvolutionaryTrace" id="Q04571"/>
<dbReference type="Proteomes" id="UP000001805">
    <property type="component" value="Chromosome 6, Linkage Group II"/>
</dbReference>
<dbReference type="GO" id="GO:0005576">
    <property type="term" value="C:extracellular region"/>
    <property type="evidence" value="ECO:0007669"/>
    <property type="project" value="UniProtKB-KW"/>
</dbReference>
<dbReference type="GO" id="GO:0009277">
    <property type="term" value="C:fungal-type cell wall"/>
    <property type="evidence" value="ECO:0007669"/>
    <property type="project" value="InterPro"/>
</dbReference>
<dbReference type="GO" id="GO:0005199">
    <property type="term" value="F:structural constituent of cell wall"/>
    <property type="evidence" value="ECO:0007669"/>
    <property type="project" value="InterPro"/>
</dbReference>
<dbReference type="GO" id="GO:0071555">
    <property type="term" value="P:cell wall organization"/>
    <property type="evidence" value="ECO:0007669"/>
    <property type="project" value="UniProtKB-KW"/>
</dbReference>
<dbReference type="CDD" id="cd23516">
    <property type="entry name" value="hydrophobin_I_eas-like"/>
    <property type="match status" value="1"/>
</dbReference>
<dbReference type="Gene3D" id="3.20.120.10">
    <property type="entry name" value="Hydrophobin"/>
    <property type="match status" value="1"/>
</dbReference>
<dbReference type="InterPro" id="IPR001338">
    <property type="entry name" value="Hydrophobin"/>
</dbReference>
<dbReference type="InterPro" id="IPR019778">
    <property type="entry name" value="Hydrophobin_CS"/>
</dbReference>
<dbReference type="InterPro" id="IPR036686">
    <property type="entry name" value="Hydrophobin_sf"/>
</dbReference>
<dbReference type="Pfam" id="PF22354">
    <property type="entry name" value="Eas"/>
    <property type="match status" value="1"/>
</dbReference>
<dbReference type="SMART" id="SM00075">
    <property type="entry name" value="HYDRO"/>
    <property type="match status" value="1"/>
</dbReference>
<dbReference type="PROSITE" id="PS00956">
    <property type="entry name" value="HYDROPHOBIN"/>
    <property type="match status" value="1"/>
</dbReference>
<accession>Q04571</accession>
<accession>Q2XN72</accession>
<accession>Q7SC53</accession>
<protein>
    <recommendedName>
        <fullName evidence="9">Class I hydrophobin eas</fullName>
    </recommendedName>
    <alternativeName>
        <fullName evidence="11">Blue light-induced protein 7</fullName>
    </alternativeName>
    <alternativeName>
        <fullName evidence="10">Clock-controlled gene protein 2</fullName>
    </alternativeName>
    <alternativeName>
        <fullName evidence="9">Easily wettable protein</fullName>
    </alternativeName>
    <alternativeName>
        <fullName evidence="10">Rodlet protein</fullName>
    </alternativeName>
</protein>
<evidence type="ECO:0000255" key="1"/>
<evidence type="ECO:0000269" key="2">
    <source>
    </source>
</evidence>
<evidence type="ECO:0000269" key="3">
    <source>
    </source>
</evidence>
<evidence type="ECO:0000269" key="4">
    <source>
    </source>
</evidence>
<evidence type="ECO:0000269" key="5">
    <source>
    </source>
</evidence>
<evidence type="ECO:0000269" key="6">
    <source>
    </source>
</evidence>
<evidence type="ECO:0000269" key="7">
    <source>
    </source>
</evidence>
<evidence type="ECO:0000269" key="8">
    <source>
    </source>
</evidence>
<evidence type="ECO:0000303" key="9">
    <source>
    </source>
</evidence>
<evidence type="ECO:0000303" key="10">
    <source>
    </source>
</evidence>
<evidence type="ECO:0000303" key="11">
    <source>
    </source>
</evidence>
<evidence type="ECO:0000305" key="12"/>
<evidence type="ECO:0007744" key="13">
    <source>
        <dbReference type="PDB" id="2FMC"/>
    </source>
</evidence>
<evidence type="ECO:0007744" key="14">
    <source>
        <dbReference type="PDB" id="2K6A"/>
    </source>
</evidence>
<evidence type="ECO:0007744" key="15">
    <source>
        <dbReference type="PDB" id="2LFN"/>
    </source>
</evidence>
<evidence type="ECO:0007744" key="16">
    <source>
        <dbReference type="PDB" id="4BWH"/>
    </source>
</evidence>
<evidence type="ECO:0007829" key="17">
    <source>
        <dbReference type="PDB" id="2FMC"/>
    </source>
</evidence>
<evidence type="ECO:0007829" key="18">
    <source>
        <dbReference type="PDB" id="2K6A"/>
    </source>
</evidence>
<gene>
    <name evidence="9" type="primary">eas</name>
    <name evidence="11" type="synonym">bli-7</name>
    <name evidence="10" type="synonym">ccg-2</name>
    <name type="ORF">NCU08457</name>
</gene>
<proteinExistence type="evidence at protein level"/>
<feature type="signal peptide" evidence="1">
    <location>
        <begin position="1"/>
        <end position="26"/>
    </location>
</feature>
<feature type="chain" id="PRO_0000013509" description="Class I hydrophobin eas">
    <location>
        <begin position="27"/>
        <end position="108"/>
    </location>
</feature>
<feature type="disulfide bond" evidence="5 6 7 13 14 15">
    <location>
        <begin position="35"/>
        <end position="86"/>
    </location>
</feature>
<feature type="disulfide bond" evidence="5 6 7 13 14 15">
    <location>
        <begin position="44"/>
        <end position="80"/>
    </location>
</feature>
<feature type="disulfide bond" evidence="5 6 7 13 14 15">
    <location>
        <begin position="45"/>
        <end position="71"/>
    </location>
</feature>
<feature type="disulfide bond" evidence="5 6 7 13 14 15">
    <location>
        <begin position="87"/>
        <end position="106"/>
    </location>
</feature>
<feature type="mutagenesis site" description="Does not significantly affect self-assembly and rodlet formation." evidence="7">
    <original>V</original>
    <variation>I</variation>
    <location>
        <position position="72"/>
    </location>
</feature>
<feature type="mutagenesis site" description="Increases self-assembly and rodlet formation." evidence="7">
    <original>V</original>
    <variation>G</variation>
    <location>
        <position position="73"/>
    </location>
</feature>
<feature type="mutagenesis site" description="Increases self-assembly and rodlet formation." evidence="7">
    <original>V</original>
    <variation>G</variation>
    <location>
        <position position="75"/>
    </location>
</feature>
<feature type="mutagenesis site" description="Does not significantly affect self-assembly and rodlet formation." evidence="7">
    <original>I</original>
    <variation>A</variation>
    <location>
        <position position="76"/>
    </location>
</feature>
<feature type="mutagenesis site" description="Does not significantly affect self-assembly and rodlet formation." evidence="7">
    <original>N</original>
    <variation>G</variation>
    <location>
        <position position="96"/>
    </location>
</feature>
<feature type="mutagenesis site" description="Does not significantly affect self-assembly and rodlet formation." evidence="7">
    <original>F</original>
    <variation>A</variation>
    <location>
        <position position="98"/>
    </location>
</feature>
<feature type="mutagenesis site" description="Impairs self-assembly and rodlet formation." evidence="7">
    <original>F</original>
    <variation>G</variation>
    <location>
        <position position="98"/>
    </location>
</feature>
<feature type="mutagenesis site" description="Impairs self-assembly and rodlet formation." evidence="7">
    <original>L</original>
    <variation>G</variation>
    <location>
        <position position="99"/>
    </location>
</feature>
<feature type="mutagenesis site" description="Impairs self-assembly and rodlet formation." evidence="7">
    <original>I</original>
    <variation>G</variation>
    <location>
        <position position="100"/>
    </location>
</feature>
<feature type="mutagenesis site" description="Impairs self-assembly and rodlet formation." evidence="7">
    <original>I</original>
    <variation>G</variation>
    <location>
        <position position="101"/>
    </location>
</feature>
<feature type="mutagenesis site" description="Decreases self-assembly and rodlet formation." evidence="7">
    <original>N</original>
    <variation>G</variation>
    <location>
        <position position="102"/>
    </location>
</feature>
<feature type="strand" evidence="18">
    <location>
        <begin position="28"/>
        <end position="30"/>
    </location>
</feature>
<feature type="strand" evidence="17">
    <location>
        <begin position="37"/>
        <end position="39"/>
    </location>
</feature>
<feature type="strand" evidence="17">
    <location>
        <begin position="41"/>
        <end position="45"/>
    </location>
</feature>
<feature type="strand" evidence="18">
    <location>
        <begin position="69"/>
        <end position="73"/>
    </location>
</feature>
<feature type="strand" evidence="17">
    <location>
        <begin position="79"/>
        <end position="88"/>
    </location>
</feature>
<feature type="turn" evidence="17">
    <location>
        <begin position="93"/>
        <end position="95"/>
    </location>
</feature>
<feature type="strand" evidence="17">
    <location>
        <begin position="96"/>
        <end position="98"/>
    </location>
</feature>
<feature type="strand" evidence="18">
    <location>
        <begin position="99"/>
        <end position="101"/>
    </location>
</feature>
<feature type="strand" evidence="17">
    <location>
        <begin position="104"/>
        <end position="107"/>
    </location>
</feature>
<name>RODL_NEUCR</name>